<dbReference type="EMBL" id="U27200">
    <property type="protein sequence ID" value="AAC54466.1"/>
    <property type="molecule type" value="Genomic_DNA"/>
</dbReference>
<dbReference type="SMR" id="Q74230"/>
<dbReference type="PRO" id="PR:Q74230"/>
<dbReference type="Proteomes" id="UP000007423">
    <property type="component" value="Segment"/>
</dbReference>
<dbReference type="GO" id="GO:0042025">
    <property type="term" value="C:host cell nucleus"/>
    <property type="evidence" value="ECO:0007669"/>
    <property type="project" value="UniProtKB-SubCell"/>
</dbReference>
<dbReference type="GO" id="GO:0020002">
    <property type="term" value="C:host cell plasma membrane"/>
    <property type="evidence" value="ECO:0007669"/>
    <property type="project" value="UniProtKB-SubCell"/>
</dbReference>
<dbReference type="GO" id="GO:0072494">
    <property type="term" value="C:host multivesicular body"/>
    <property type="evidence" value="ECO:0007669"/>
    <property type="project" value="UniProtKB-SubCell"/>
</dbReference>
<dbReference type="GO" id="GO:0016020">
    <property type="term" value="C:membrane"/>
    <property type="evidence" value="ECO:0007669"/>
    <property type="project" value="UniProtKB-KW"/>
</dbReference>
<dbReference type="GO" id="GO:0019013">
    <property type="term" value="C:viral nucleocapsid"/>
    <property type="evidence" value="ECO:0007669"/>
    <property type="project" value="UniProtKB-KW"/>
</dbReference>
<dbReference type="GO" id="GO:0055036">
    <property type="term" value="C:virion membrane"/>
    <property type="evidence" value="ECO:0007669"/>
    <property type="project" value="UniProtKB-SubCell"/>
</dbReference>
<dbReference type="GO" id="GO:0003723">
    <property type="term" value="F:RNA binding"/>
    <property type="evidence" value="ECO:0007669"/>
    <property type="project" value="UniProtKB-KW"/>
</dbReference>
<dbReference type="GO" id="GO:0005198">
    <property type="term" value="F:structural molecule activity"/>
    <property type="evidence" value="ECO:0007669"/>
    <property type="project" value="InterPro"/>
</dbReference>
<dbReference type="GO" id="GO:0008270">
    <property type="term" value="F:zinc ion binding"/>
    <property type="evidence" value="ECO:0007669"/>
    <property type="project" value="UniProtKB-KW"/>
</dbReference>
<dbReference type="GO" id="GO:0039702">
    <property type="term" value="P:viral budding via host ESCRT complex"/>
    <property type="evidence" value="ECO:0007669"/>
    <property type="project" value="UniProtKB-KW"/>
</dbReference>
<dbReference type="GO" id="GO:0075523">
    <property type="term" value="P:viral translational frameshifting"/>
    <property type="evidence" value="ECO:0007669"/>
    <property type="project" value="UniProtKB-KW"/>
</dbReference>
<dbReference type="Gene3D" id="1.10.1200.30">
    <property type="match status" value="1"/>
</dbReference>
<dbReference type="Gene3D" id="1.10.375.10">
    <property type="entry name" value="Human Immunodeficiency Virus Type 1 Capsid Protein"/>
    <property type="match status" value="1"/>
</dbReference>
<dbReference type="Gene3D" id="1.10.150.90">
    <property type="entry name" value="Immunodeficiency lentiviruses, gag gene matrix protein p17"/>
    <property type="match status" value="1"/>
</dbReference>
<dbReference type="Gene3D" id="1.20.5.760">
    <property type="entry name" value="Single helix bin"/>
    <property type="match status" value="1"/>
</dbReference>
<dbReference type="Gene3D" id="4.10.60.10">
    <property type="entry name" value="Zinc finger, CCHC-type"/>
    <property type="match status" value="1"/>
</dbReference>
<dbReference type="InterPro" id="IPR045345">
    <property type="entry name" value="Gag_p24_C"/>
</dbReference>
<dbReference type="InterPro" id="IPR000071">
    <property type="entry name" value="Lentvrl_matrix_N"/>
</dbReference>
<dbReference type="InterPro" id="IPR012344">
    <property type="entry name" value="Matrix_HIV/RSV_N"/>
</dbReference>
<dbReference type="InterPro" id="IPR050195">
    <property type="entry name" value="Primate_lentivir_Gag_pol-like"/>
</dbReference>
<dbReference type="InterPro" id="IPR008916">
    <property type="entry name" value="Retrov_capsid_C"/>
</dbReference>
<dbReference type="InterPro" id="IPR008919">
    <property type="entry name" value="Retrov_capsid_N"/>
</dbReference>
<dbReference type="InterPro" id="IPR010999">
    <property type="entry name" value="Retrovr_matrix"/>
</dbReference>
<dbReference type="InterPro" id="IPR001878">
    <property type="entry name" value="Znf_CCHC"/>
</dbReference>
<dbReference type="InterPro" id="IPR036875">
    <property type="entry name" value="Znf_CCHC_sf"/>
</dbReference>
<dbReference type="PANTHER" id="PTHR40389">
    <property type="entry name" value="ENDOGENOUS RETROVIRUS GROUP K MEMBER 24 GAG POLYPROTEIN-RELATED"/>
    <property type="match status" value="1"/>
</dbReference>
<dbReference type="PANTHER" id="PTHR40389:SF2">
    <property type="entry name" value="ENDOGENOUS RETROVIRUS GROUP K MEMBER 24 GAG POLYPROTEIN-RELATED"/>
    <property type="match status" value="1"/>
</dbReference>
<dbReference type="Pfam" id="PF00540">
    <property type="entry name" value="Gag_p17"/>
    <property type="match status" value="1"/>
</dbReference>
<dbReference type="Pfam" id="PF00607">
    <property type="entry name" value="Gag_p24"/>
    <property type="match status" value="1"/>
</dbReference>
<dbReference type="Pfam" id="PF19317">
    <property type="entry name" value="Gag_p24_C"/>
    <property type="match status" value="1"/>
</dbReference>
<dbReference type="Pfam" id="PF00098">
    <property type="entry name" value="zf-CCHC"/>
    <property type="match status" value="2"/>
</dbReference>
<dbReference type="PRINTS" id="PR00234">
    <property type="entry name" value="HIV1MATRIX"/>
</dbReference>
<dbReference type="SMART" id="SM00343">
    <property type="entry name" value="ZnF_C2HC"/>
    <property type="match status" value="2"/>
</dbReference>
<dbReference type="SUPFAM" id="SSF47836">
    <property type="entry name" value="Retroviral matrix proteins"/>
    <property type="match status" value="1"/>
</dbReference>
<dbReference type="SUPFAM" id="SSF47353">
    <property type="entry name" value="Retrovirus capsid dimerization domain-like"/>
    <property type="match status" value="1"/>
</dbReference>
<dbReference type="SUPFAM" id="SSF47943">
    <property type="entry name" value="Retrovirus capsid protein, N-terminal core domain"/>
    <property type="match status" value="1"/>
</dbReference>
<dbReference type="SUPFAM" id="SSF57756">
    <property type="entry name" value="Retrovirus zinc finger-like domains"/>
    <property type="match status" value="1"/>
</dbReference>
<dbReference type="PROSITE" id="PS50158">
    <property type="entry name" value="ZF_CCHC"/>
    <property type="match status" value="2"/>
</dbReference>
<organismHost>
    <name type="scientific">Homo sapiens</name>
    <name type="common">Human</name>
    <dbReference type="NCBI Taxonomy" id="9606"/>
</organismHost>
<feature type="initiator methionine" description="Removed; by host" evidence="1">
    <location>
        <position position="1"/>
    </location>
</feature>
<feature type="chain" id="PRO_0000261244" description="Gag polyprotein">
    <location>
        <begin position="2"/>
        <end position="519"/>
    </location>
</feature>
<feature type="chain" id="PRO_0000246434" description="Matrix protein p17" evidence="1">
    <location>
        <begin position="2"/>
        <end position="130"/>
    </location>
</feature>
<feature type="chain" id="PRO_0000246435" description="Capsid protein p24" evidence="1">
    <location>
        <begin position="131"/>
        <end position="360"/>
    </location>
</feature>
<feature type="peptide" id="PRO_0000246436" description="Spacer peptide 1" evidence="1">
    <location>
        <begin position="361"/>
        <end position="377"/>
    </location>
</feature>
<feature type="chain" id="PRO_0000246437" description="Nucleocapsid protein p7" evidence="1">
    <location>
        <begin position="378"/>
        <end position="429"/>
    </location>
</feature>
<feature type="peptide" id="PRO_0000246438" description="Spacer peptide 2" evidence="1">
    <location>
        <begin position="430"/>
        <end position="443"/>
    </location>
</feature>
<feature type="chain" id="PRO_0000246439" description="p6-gag" evidence="1">
    <location>
        <begin position="444"/>
        <end position="519"/>
    </location>
</feature>
<feature type="zinc finger region" description="CCHC-type 1" evidence="9">
    <location>
        <begin position="387"/>
        <end position="404"/>
    </location>
</feature>
<feature type="zinc finger region" description="CCHC-type 2" evidence="9">
    <location>
        <begin position="408"/>
        <end position="425"/>
    </location>
</feature>
<feature type="region of interest" description="Interaction with Gp41" evidence="6">
    <location>
        <begin position="7"/>
        <end position="31"/>
    </location>
</feature>
<feature type="region of interest" description="Interaction with host CALM1" evidence="5">
    <location>
        <begin position="8"/>
        <end position="43"/>
    </location>
</feature>
<feature type="region of interest" description="Interaction with host AP3D1" evidence="7">
    <location>
        <begin position="12"/>
        <end position="19"/>
    </location>
</feature>
<feature type="region of interest" description="Interaction with membrane phosphatidylinositol 4,5-bisphosphate and RNA" evidence="6">
    <location>
        <begin position="14"/>
        <end position="33"/>
    </location>
</feature>
<feature type="region of interest" description="Interaction with membrane phosphatidylinositol 4,5-bisphosphate" evidence="6">
    <location>
        <begin position="73"/>
        <end position="77"/>
    </location>
</feature>
<feature type="region of interest" description="Interaction with host PPIA/CYPA and NUP153" evidence="6">
    <location>
        <begin position="186"/>
        <end position="223"/>
    </location>
</feature>
<feature type="region of interest" description="PPIA/CYPA-binding loop" evidence="5">
    <location>
        <begin position="214"/>
        <end position="221"/>
    </location>
</feature>
<feature type="region of interest" description="Dimerization/Multimerization of capsid protein p24" evidence="5">
    <location>
        <begin position="274"/>
        <end position="360"/>
    </location>
</feature>
<feature type="short sequence motif" description="Nuclear export signal" evidence="1">
    <location>
        <begin position="16"/>
        <end position="22"/>
    </location>
</feature>
<feature type="short sequence motif" description="Nuclear localization signal" evidence="1">
    <location>
        <begin position="26"/>
        <end position="32"/>
    </location>
</feature>
<feature type="short sequence motif" description="PTAP/PSAP motif">
    <location>
        <begin position="453"/>
        <end position="456"/>
    </location>
</feature>
<feature type="site" description="Cleavage; by viral protease" evidence="1">
    <location>
        <begin position="130"/>
        <end position="131"/>
    </location>
</feature>
<feature type="site" description="Cleavage; by viral protease" evidence="1">
    <location>
        <begin position="360"/>
        <end position="361"/>
    </location>
</feature>
<feature type="site" description="Cleavage; by viral protease" evidence="1">
    <location>
        <begin position="377"/>
        <end position="378"/>
    </location>
</feature>
<feature type="site" description="Cleavage; by viral protease" evidence="1">
    <location>
        <begin position="429"/>
        <end position="430"/>
    </location>
</feature>
<feature type="site" description="Cleavage; by viral protease" evidence="1">
    <location>
        <begin position="443"/>
        <end position="444"/>
    </location>
</feature>
<feature type="modified residue" description="Phosphoserine; by host MAPK1" evidence="6">
    <location>
        <position position="145"/>
    </location>
</feature>
<feature type="lipid moiety-binding region" description="N-myristoyl glycine; by host" evidence="1">
    <location>
        <position position="2"/>
    </location>
</feature>
<reference key="1">
    <citation type="journal article" date="1995" name="AIDS Res. Hum. Retroviruses">
        <title>Nucleotide sequence of the HIV-2 EHO genome, a divergent HIV-2 isolate.</title>
        <authorList>
            <person name="Galabru J."/>
            <person name="Rey-Cuille M.A."/>
            <person name="Hovanessian A.G."/>
        </authorList>
    </citation>
    <scope>NUCLEOTIDE SEQUENCE [GENOMIC DNA]</scope>
</reference>
<proteinExistence type="inferred from homology"/>
<organism>
    <name type="scientific">Human immunodeficiency virus type 2 subtype B (isolate EHO)</name>
    <name type="common">HIV-2</name>
    <dbReference type="NCBI Taxonomy" id="388821"/>
    <lineage>
        <taxon>Viruses</taxon>
        <taxon>Riboviria</taxon>
        <taxon>Pararnavirae</taxon>
        <taxon>Artverviricota</taxon>
        <taxon>Revtraviricetes</taxon>
        <taxon>Ortervirales</taxon>
        <taxon>Retroviridae</taxon>
        <taxon>Orthoretrovirinae</taxon>
        <taxon>Lentivirus</taxon>
        <taxon>Human immunodeficiency virus 2</taxon>
    </lineage>
</organism>
<gene>
    <name type="primary">gag</name>
</gene>
<keyword id="KW-0014">AIDS</keyword>
<keyword id="KW-0167">Capsid protein</keyword>
<keyword id="KW-1032">Host cell membrane</keyword>
<keyword id="KW-1035">Host cytoplasm</keyword>
<keyword id="KW-1039">Host endosome</keyword>
<keyword id="KW-1043">Host membrane</keyword>
<keyword id="KW-1048">Host nucleus</keyword>
<keyword id="KW-0945">Host-virus interaction</keyword>
<keyword id="KW-0449">Lipoprotein</keyword>
<keyword id="KW-0472">Membrane</keyword>
<keyword id="KW-0479">Metal-binding</keyword>
<keyword id="KW-0519">Myristate</keyword>
<keyword id="KW-0597">Phosphoprotein</keyword>
<keyword id="KW-0677">Repeat</keyword>
<keyword id="KW-0688">Ribosomal frameshifting</keyword>
<keyword id="KW-0694">RNA-binding</keyword>
<keyword id="KW-1198">Viral budding</keyword>
<keyword id="KW-1187">Viral budding via the host ESCRT complexes</keyword>
<keyword id="KW-0543">Viral nucleoprotein</keyword>
<keyword id="KW-1188">Viral release from host cell</keyword>
<keyword id="KW-0946">Virion</keyword>
<keyword id="KW-0862">Zinc</keyword>
<keyword id="KW-0863">Zinc-finger</keyword>
<name>GAG_HV2EH</name>
<evidence type="ECO:0000250" key="1"/>
<evidence type="ECO:0000250" key="2">
    <source>
        <dbReference type="UniProtKB" id="P03347"/>
    </source>
</evidence>
<evidence type="ECO:0000250" key="3">
    <source>
        <dbReference type="UniProtKB" id="P03348"/>
    </source>
</evidence>
<evidence type="ECO:0000250" key="4">
    <source>
        <dbReference type="UniProtKB" id="P03349"/>
    </source>
</evidence>
<evidence type="ECO:0000250" key="5">
    <source>
        <dbReference type="UniProtKB" id="P04591"/>
    </source>
</evidence>
<evidence type="ECO:0000250" key="6">
    <source>
        <dbReference type="UniProtKB" id="P12493"/>
    </source>
</evidence>
<evidence type="ECO:0000250" key="7">
    <source>
        <dbReference type="UniProtKB" id="P12497"/>
    </source>
</evidence>
<evidence type="ECO:0000250" key="8">
    <source>
        <dbReference type="UniProtKB" id="P18095"/>
    </source>
</evidence>
<evidence type="ECO:0000255" key="9">
    <source>
        <dbReference type="PROSITE-ProRule" id="PRU00047"/>
    </source>
</evidence>
<evidence type="ECO:0000305" key="10"/>
<comment type="function">
    <molecule>Gag polyprotein</molecule>
    <text evidence="5">Mediates, with Gag-Pol polyprotein, the essential events in virion assembly, including binding the plasma membrane, making the protein-protein interactions necessary to create spherical particles, recruiting the viral Env proteins, and packaging the genomic RNA via direct interactions with the RNA packaging sequence (Psi).</text>
</comment>
<comment type="function">
    <molecule>Matrix protein p17</molecule>
    <text evidence="1 6">Targets the polyprotein to the plasma membrane via a multipartite membrane-binding signal, that includes its myristoylated N-terminus (By similarity). Matrix protein is part of the pre-integration complex. Implicated in the release from host cell mediated by Vpu. Binds to RNA (By similarity).</text>
</comment>
<comment type="function">
    <molecule>Capsid protein p24</molecule>
    <text evidence="5 6 8">Forms the conical core that encapsulates the genomic RNA-nucleocapsid complex in the virion (By similarity). Most core are conical, with only 7% tubular (By similarity). The core is constituted by capsid protein hexamer subunits (By similarity). The core is disassembled soon after virion entry (By similarity). Host restriction factors such as TRIM5-alpha or TRIMCyp bind retroviral capsids and cause premature capsid disassembly, leading to blocks in reverse transcription (By similarity). Capsid restriction by TRIM5 is one of the factors which restricts HIV-1 to the human species (By similarity). Host PIN1 apparently facilitates the virion uncoating (By similarity). On the other hand, interactions with PDZD8 or CYPA stabilize the capsid (By similarity). The capsid interacts with high affinity with human NONO, promoting detection of viral DNA by CGAS, leading to CGAS-mediated inmmune activation (By similarity).</text>
</comment>
<comment type="function">
    <molecule>Nucleocapsid protein p7</molecule>
    <text evidence="5">Encapsulates and protects viral dimeric unspliced genomic RNA (gRNA). Binds these RNAs through its zinc fingers. Acts as a nucleic acid chaperone which is involved in rearangement of nucleic acid secondary structure during gRNA retrotranscription. Also facilitates template switch leading to recombination. As part of the polyprotein, participates in gRNA dimerization, packaging, tRNA incorporation and virion assembly.</text>
</comment>
<comment type="function">
    <molecule>p6-gag</molecule>
    <text evidence="6">Plays a role in budding of the assembled particle by interacting with the host class E VPS proteins TSG101 and PDCD6IP/AIP1.</text>
</comment>
<comment type="subunit">
    <molecule>Gag polyprotein</molecule>
    <text evidence="4 5">Homotrimer; further assembles as hexamers of trimers. Oligomerization possibly creates a central hole into which the cytoplasmic tail of the gp41 envelope protein may be inserted. Interacts with host TRIM22; this interaction seems to disrupt proper trafficking of Gag polyprotein and may interfere with budding. Interacts with host PDZD8. When ubiquitinated, interacts (via p6-gag domain) with host PACSIN2; this interaction allows PACSIN2 recruitment to viral assembly sites and its subsequent incorporation into virions (By similarity).</text>
</comment>
<comment type="subunit">
    <molecule>Matrix protein p17</molecule>
    <text evidence="5 6">Homotrimer; further assembles as hexamers of trimers. Interacts with gp41 (via C-terminus). Interacts with host CALM1; this interaction induces a conformational change in the Matrix protein, triggering exposure of the myristate group. Interacts with host AP3D1; this interaction allows the polyprotein trafficking to multivesicular bodies during virus assembly. Part of the pre-integration complex (PIC) which is composed of viral genome, matrix protein, Vpr and integrase.</text>
</comment>
<comment type="subunit">
    <molecule>Capsid protein p24</molecule>
    <text evidence="5 6 8">Homodimer; the homodimer further multimerizes as homohexamers or homopentamers (By similarity). Interacts with host NUP98 (By similarity). Interacts with host PPIA/CYPA; this interaction stabilizes the capsid (By similarity). Interacts with host NUP153 (By similarity). Interacts with host PDZD8; this interaction stabilizes the capsid. Interacts with host TRIM5; this interaction destabilizes the capsid (By similarity). Interacts with host CPSF6 (By similarity). Interacts with host NONO; the interaction is the interaction is strong and promotes CGAS-mediated immunity (By similarity).</text>
</comment>
<comment type="subunit">
    <molecule>Nucleocapsid protein p7</molecule>
    <text evidence="6">Interacts with host NUP98.</text>
</comment>
<comment type="subunit">
    <molecule>p6-gag</molecule>
    <text evidence="3 6">Interacts with Vpr; this interaction allows Vpr incorporation into the virion. Interacts with host TSG101. p6-gag interacts with host PDCD6IP/AIP1.</text>
</comment>
<comment type="subcellular location">
    <molecule>Gag polyprotein</molecule>
    <subcellularLocation>
        <location evidence="6">Host cell membrane</location>
        <topology evidence="6">Lipid-anchor</topology>
    </subcellularLocation>
    <subcellularLocation>
        <location evidence="6">Host endosome</location>
        <location evidence="6">Host multivesicular body</location>
    </subcellularLocation>
    <text evidence="6">These locations are probably linked to virus assembly sites. The main location is the cell membrane, but under some circumstances, late endosomal compartments can serve as productive sites for virion assembly.</text>
</comment>
<comment type="subcellular location">
    <molecule>Matrix protein p17</molecule>
    <subcellularLocation>
        <location evidence="6">Virion membrane</location>
        <topology evidence="6">Lipid-anchor</topology>
    </subcellularLocation>
    <subcellularLocation>
        <location evidence="1">Host nucleus</location>
    </subcellularLocation>
    <subcellularLocation>
        <location evidence="1">Host cytoplasm</location>
    </subcellularLocation>
</comment>
<comment type="subcellular location">
    <molecule>Capsid protein p24</molecule>
    <subcellularLocation>
        <location evidence="6">Virion</location>
    </subcellularLocation>
</comment>
<comment type="subcellular location">
    <molecule>Nucleocapsid protein p7</molecule>
    <subcellularLocation>
        <location evidence="6">Virion</location>
    </subcellularLocation>
</comment>
<comment type="alternative products">
    <event type="ribosomal frameshifting"/>
    <isoform>
        <id>Q74230-1</id>
        <name>Gag polyprotein</name>
        <sequence type="displayed"/>
    </isoform>
    <isoform>
        <id>Q89928-1</id>
        <name>Gag-Pol polyprotein</name>
        <sequence type="external"/>
    </isoform>
    <text>Translation results in the formation of the Gag polyprotein most of the time. Ribosomal frameshifting at the gag-pol genes boundary occurs at low frequency and produces the Gag-Pol polyprotein. This strategy of translation probably allows the virus to modulate the quantity of each viral protein. Maintenance of a correct Gag to Gag-Pol ratio is essential for RNA dimerization and viral infectivity.</text>
</comment>
<comment type="domain">
    <text evidence="1">Late-budding domains (L domains) are short sequence motifs essential for viral particle budding. They recruit proteins of the host ESCRT machinery (Endosomal Sorting Complex Required for Transport) or ESCRT-associated proteins. p6-gag contains one L domains: a PTAP/PSAP motif, which interacts with the UEV domain of TSG101 (By similarity).</text>
</comment>
<comment type="PTM">
    <text evidence="6">Gag-Pol polyprotein: Specific enzymatic cleavages by the viral protease yield mature proteins.</text>
</comment>
<comment type="PTM">
    <molecule>Matrix protein p17</molecule>
    <text evidence="5">Tyrosine phosphorylated presumably in the virion by a host kinase. Phosphorylation is apparently not a major regulator of membrane association.</text>
</comment>
<comment type="PTM">
    <text evidence="6">Capsid protein p24 is phosphorylated possibly by host MAPK1; this phosphorylation is necessary for Pin1-mediated virion uncoating.</text>
</comment>
<comment type="PTM">
    <text evidence="2">Nucleocapsid protein p7 is methylated by host PRMT6, impairing its function by reducing RNA annealing and the initiation of reverse transcription.</text>
</comment>
<comment type="miscellaneous">
    <molecule>Isoform Gag polyprotein</molecule>
    <text>Produced by conventional translation.</text>
</comment>
<comment type="similarity">
    <text evidence="10">Belongs to the primate lentivirus group gag polyprotein family.</text>
</comment>
<sequence>MGARGSVLSGKKTDELEKVRLRPGGKKRYMLKHIVWAVNELERFGLAESRLGSKEGCRKIRKVLGPLVPTGSENLKSLYNTVCVIFCLHAEEKVKDTEEAKKIAQRHLAADTEKMPAMSKPSKPTSRLAYPVQQIAGNYSHLPLSPRTLNAWVKLVEEKKFGAEVVPGFQALSEGCTPYDINQMLNCVGEHQAAMQIIREIINEEAADWDQQHPSPGPMPAGQLREPRGSDIAGTTSTVEEQIQWMYRPQNPVPVGNIYRRWIQLGLQKCVRMYNPTNILDIKQGPKEPFQSYVDRFYKSLRAEQTDPAVKNWMTQTLLIQNANPDCKLVLKGLGMNPTLEEMLTACQGIGGPGQKARLMAEALKEALTPSTNPFAAAQPRAGKRTVTCWNCGKAGHTARQCKAPRRQGCWKCGQQGHIMSKCPERQAGFLGFGPWGKKPRNFPVQAPQGIVPSAPPMNPAFGMTPQGAIPSAPPADPAEEMLKNYMQLGKKQKENRERPYKEVTEDLLHLNSLFGEDQ</sequence>
<protein>
    <recommendedName>
        <fullName>Gag polyprotein</fullName>
    </recommendedName>
    <alternativeName>
        <fullName>Pr55Gag</fullName>
    </alternativeName>
    <component>
        <recommendedName>
            <fullName>Matrix protein p17</fullName>
            <shortName>MA</shortName>
        </recommendedName>
    </component>
    <component>
        <recommendedName>
            <fullName>Capsid protein p24</fullName>
            <shortName>CA</shortName>
        </recommendedName>
    </component>
    <component>
        <recommendedName>
            <fullName evidence="6">Spacer peptide 1</fullName>
            <shortName>SP1</shortName>
        </recommendedName>
        <alternativeName>
            <fullName>p2</fullName>
        </alternativeName>
    </component>
    <component>
        <recommendedName>
            <fullName>Nucleocapsid protein p7</fullName>
            <shortName>NC</shortName>
        </recommendedName>
    </component>
    <component>
        <recommendedName>
            <fullName evidence="6">Spacer peptide 2</fullName>
            <shortName>SP2</shortName>
        </recommendedName>
        <alternativeName>
            <fullName>p1</fullName>
        </alternativeName>
    </component>
    <component>
        <recommendedName>
            <fullName>p6-gag</fullName>
        </recommendedName>
    </component>
</protein>
<accession>Q74230</accession>